<protein>
    <recommendedName>
        <fullName>Hemocyanin subunit 4</fullName>
    </recommendedName>
</protein>
<keyword id="KW-0186">Copper</keyword>
<keyword id="KW-0903">Direct protein sequencing</keyword>
<keyword id="KW-0561">Oxygen transport</keyword>
<keyword id="KW-0964">Secreted</keyword>
<keyword id="KW-0813">Transport</keyword>
<name>HCY4_CARMA</name>
<reference evidence="1" key="1">
    <citation type="journal article" date="1999" name="Comp. Biochem. Physiol.">
        <title>Subunit composition and N-terminal analysis of arthropod hemocyanins.</title>
        <authorList>
            <person name="Stoeva S."/>
            <person name="Dolashka P."/>
            <person name="Hristova R."/>
            <person name="Genov N."/>
            <person name="Voelter W."/>
        </authorList>
    </citation>
    <scope>PROTEIN SEQUENCE</scope>
</reference>
<proteinExistence type="evidence at protein level"/>
<dbReference type="GO" id="GO:0005576">
    <property type="term" value="C:extracellular region"/>
    <property type="evidence" value="ECO:0007669"/>
    <property type="project" value="UniProtKB-SubCell"/>
</dbReference>
<dbReference type="GO" id="GO:0005344">
    <property type="term" value="F:oxygen carrier activity"/>
    <property type="evidence" value="ECO:0007669"/>
    <property type="project" value="UniProtKB-KW"/>
</dbReference>
<evidence type="ECO:0000305" key="1"/>
<sequence length="23" mass="2622">GFGEDIAMKQHQVNSLLDILFVF</sequence>
<accession>P82309</accession>
<comment type="function">
    <text>Hemocyanins are copper-containing oxygen carriers occurring freely dissolved in the hemolymph of many mollusks and arthropods.</text>
</comment>
<comment type="subcellular location">
    <subcellularLocation>
        <location>Secreted</location>
        <location>Extracellular space</location>
    </subcellularLocation>
</comment>
<comment type="tissue specificity">
    <text>Hemolymph.</text>
</comment>
<comment type="similarity">
    <text evidence="1">Belongs to the tyrosinase family. Hemocyanin subfamily.</text>
</comment>
<feature type="chain" id="PRO_0000204259" description="Hemocyanin subunit 4">
    <location>
        <begin position="1"/>
        <end position="23" status="greater than"/>
    </location>
</feature>
<feature type="non-terminal residue" evidence="1">
    <location>
        <position position="23"/>
    </location>
</feature>
<organism evidence="1">
    <name type="scientific">Carcinus maenas</name>
    <name type="common">Common shore crab</name>
    <name type="synonym">Green crab</name>
    <dbReference type="NCBI Taxonomy" id="6759"/>
    <lineage>
        <taxon>Eukaryota</taxon>
        <taxon>Metazoa</taxon>
        <taxon>Ecdysozoa</taxon>
        <taxon>Arthropoda</taxon>
        <taxon>Crustacea</taxon>
        <taxon>Multicrustacea</taxon>
        <taxon>Malacostraca</taxon>
        <taxon>Eumalacostraca</taxon>
        <taxon>Eucarida</taxon>
        <taxon>Decapoda</taxon>
        <taxon>Pleocyemata</taxon>
        <taxon>Brachyura</taxon>
        <taxon>Eubrachyura</taxon>
        <taxon>Portunoidea</taxon>
        <taxon>Carcinidae</taxon>
        <taxon>Carcinus</taxon>
    </lineage>
</organism>